<proteinExistence type="inferred from homology"/>
<protein>
    <recommendedName>
        <fullName evidence="1">Lipoyl synthase</fullName>
        <ecNumber evidence="1">2.8.1.8</ecNumber>
    </recommendedName>
    <alternativeName>
        <fullName evidence="1">Lip-syn</fullName>
        <shortName evidence="1">LS</shortName>
    </alternativeName>
    <alternativeName>
        <fullName evidence="1">Lipoate synthase</fullName>
    </alternativeName>
    <alternativeName>
        <fullName evidence="1">Lipoic acid synthase</fullName>
    </alternativeName>
    <alternativeName>
        <fullName evidence="1">Sulfur insertion protein LipA</fullName>
    </alternativeName>
</protein>
<organism>
    <name type="scientific">Vibrio parahaemolyticus serotype O3:K6 (strain RIMD 2210633)</name>
    <dbReference type="NCBI Taxonomy" id="223926"/>
    <lineage>
        <taxon>Bacteria</taxon>
        <taxon>Pseudomonadati</taxon>
        <taxon>Pseudomonadota</taxon>
        <taxon>Gammaproteobacteria</taxon>
        <taxon>Vibrionales</taxon>
        <taxon>Vibrionaceae</taxon>
        <taxon>Vibrio</taxon>
    </lineage>
</organism>
<keyword id="KW-0004">4Fe-4S</keyword>
<keyword id="KW-0963">Cytoplasm</keyword>
<keyword id="KW-0408">Iron</keyword>
<keyword id="KW-0411">Iron-sulfur</keyword>
<keyword id="KW-0479">Metal-binding</keyword>
<keyword id="KW-0949">S-adenosyl-L-methionine</keyword>
<keyword id="KW-0808">Transferase</keyword>
<accession>Q87RR1</accession>
<comment type="function">
    <text evidence="1">Catalyzes the radical-mediated insertion of two sulfur atoms into the C-6 and C-8 positions of the octanoyl moiety bound to the lipoyl domains of lipoate-dependent enzymes, thereby converting the octanoylated domains into lipoylated derivatives.</text>
</comment>
<comment type="catalytic activity">
    <reaction evidence="1">
        <text>[[Fe-S] cluster scaffold protein carrying a second [4Fe-4S](2+) cluster] + N(6)-octanoyl-L-lysyl-[protein] + 2 oxidized [2Fe-2S]-[ferredoxin] + 2 S-adenosyl-L-methionine + 4 H(+) = [[Fe-S] cluster scaffold protein] + N(6)-[(R)-dihydrolipoyl]-L-lysyl-[protein] + 4 Fe(3+) + 2 hydrogen sulfide + 2 5'-deoxyadenosine + 2 L-methionine + 2 reduced [2Fe-2S]-[ferredoxin]</text>
        <dbReference type="Rhea" id="RHEA:16585"/>
        <dbReference type="Rhea" id="RHEA-COMP:9928"/>
        <dbReference type="Rhea" id="RHEA-COMP:10000"/>
        <dbReference type="Rhea" id="RHEA-COMP:10001"/>
        <dbReference type="Rhea" id="RHEA-COMP:10475"/>
        <dbReference type="Rhea" id="RHEA-COMP:14568"/>
        <dbReference type="Rhea" id="RHEA-COMP:14569"/>
        <dbReference type="ChEBI" id="CHEBI:15378"/>
        <dbReference type="ChEBI" id="CHEBI:17319"/>
        <dbReference type="ChEBI" id="CHEBI:29034"/>
        <dbReference type="ChEBI" id="CHEBI:29919"/>
        <dbReference type="ChEBI" id="CHEBI:33722"/>
        <dbReference type="ChEBI" id="CHEBI:33737"/>
        <dbReference type="ChEBI" id="CHEBI:33738"/>
        <dbReference type="ChEBI" id="CHEBI:57844"/>
        <dbReference type="ChEBI" id="CHEBI:59789"/>
        <dbReference type="ChEBI" id="CHEBI:78809"/>
        <dbReference type="ChEBI" id="CHEBI:83100"/>
        <dbReference type="EC" id="2.8.1.8"/>
    </reaction>
</comment>
<comment type="cofactor">
    <cofactor evidence="1">
        <name>[4Fe-4S] cluster</name>
        <dbReference type="ChEBI" id="CHEBI:49883"/>
    </cofactor>
    <text evidence="1">Binds 2 [4Fe-4S] clusters per subunit. One cluster is coordinated with 3 cysteines and an exchangeable S-adenosyl-L-methionine.</text>
</comment>
<comment type="pathway">
    <text evidence="1">Protein modification; protein lipoylation via endogenous pathway; protein N(6)-(lipoyl)lysine from octanoyl-[acyl-carrier-protein]: step 2/2.</text>
</comment>
<comment type="subcellular location">
    <subcellularLocation>
        <location evidence="1">Cytoplasm</location>
    </subcellularLocation>
</comment>
<comment type="similarity">
    <text evidence="1">Belongs to the radical SAM superfamily. Lipoyl synthase family.</text>
</comment>
<name>LIPA_VIBPA</name>
<evidence type="ECO:0000255" key="1">
    <source>
        <dbReference type="HAMAP-Rule" id="MF_00206"/>
    </source>
</evidence>
<evidence type="ECO:0000255" key="2">
    <source>
        <dbReference type="PROSITE-ProRule" id="PRU01266"/>
    </source>
</evidence>
<gene>
    <name evidence="1" type="primary">lipA</name>
    <name type="ordered locus">VP0716</name>
</gene>
<dbReference type="EC" id="2.8.1.8" evidence="1"/>
<dbReference type="EMBL" id="BA000031">
    <property type="protein sequence ID" value="BAC58979.1"/>
    <property type="molecule type" value="Genomic_DNA"/>
</dbReference>
<dbReference type="RefSeq" id="NP_797095.1">
    <property type="nucleotide sequence ID" value="NC_004603.1"/>
</dbReference>
<dbReference type="RefSeq" id="WP_005488793.1">
    <property type="nucleotide sequence ID" value="NC_004603.1"/>
</dbReference>
<dbReference type="SMR" id="Q87RR1"/>
<dbReference type="GeneID" id="1188191"/>
<dbReference type="KEGG" id="vpa:VP0716"/>
<dbReference type="PATRIC" id="fig|223926.6.peg.685"/>
<dbReference type="eggNOG" id="COG0320">
    <property type="taxonomic scope" value="Bacteria"/>
</dbReference>
<dbReference type="HOGENOM" id="CLU_033144_2_1_6"/>
<dbReference type="UniPathway" id="UPA00538">
    <property type="reaction ID" value="UER00593"/>
</dbReference>
<dbReference type="Proteomes" id="UP000002493">
    <property type="component" value="Chromosome 1"/>
</dbReference>
<dbReference type="GO" id="GO:0005737">
    <property type="term" value="C:cytoplasm"/>
    <property type="evidence" value="ECO:0007669"/>
    <property type="project" value="UniProtKB-SubCell"/>
</dbReference>
<dbReference type="GO" id="GO:0051539">
    <property type="term" value="F:4 iron, 4 sulfur cluster binding"/>
    <property type="evidence" value="ECO:0007669"/>
    <property type="project" value="UniProtKB-UniRule"/>
</dbReference>
<dbReference type="GO" id="GO:0016992">
    <property type="term" value="F:lipoate synthase activity"/>
    <property type="evidence" value="ECO:0007669"/>
    <property type="project" value="UniProtKB-UniRule"/>
</dbReference>
<dbReference type="GO" id="GO:0046872">
    <property type="term" value="F:metal ion binding"/>
    <property type="evidence" value="ECO:0007669"/>
    <property type="project" value="UniProtKB-KW"/>
</dbReference>
<dbReference type="CDD" id="cd01335">
    <property type="entry name" value="Radical_SAM"/>
    <property type="match status" value="1"/>
</dbReference>
<dbReference type="FunFam" id="3.20.20.70:FF:000023">
    <property type="entry name" value="Lipoyl synthase"/>
    <property type="match status" value="1"/>
</dbReference>
<dbReference type="Gene3D" id="3.20.20.70">
    <property type="entry name" value="Aldolase class I"/>
    <property type="match status" value="1"/>
</dbReference>
<dbReference type="HAMAP" id="MF_00206">
    <property type="entry name" value="Lipoyl_synth"/>
    <property type="match status" value="1"/>
</dbReference>
<dbReference type="InterPro" id="IPR013785">
    <property type="entry name" value="Aldolase_TIM"/>
</dbReference>
<dbReference type="InterPro" id="IPR006638">
    <property type="entry name" value="Elp3/MiaA/NifB-like_rSAM"/>
</dbReference>
<dbReference type="InterPro" id="IPR031691">
    <property type="entry name" value="LIAS_N"/>
</dbReference>
<dbReference type="InterPro" id="IPR003698">
    <property type="entry name" value="Lipoyl_synth"/>
</dbReference>
<dbReference type="InterPro" id="IPR007197">
    <property type="entry name" value="rSAM"/>
</dbReference>
<dbReference type="NCBIfam" id="TIGR00510">
    <property type="entry name" value="lipA"/>
    <property type="match status" value="1"/>
</dbReference>
<dbReference type="NCBIfam" id="NF004019">
    <property type="entry name" value="PRK05481.1"/>
    <property type="match status" value="1"/>
</dbReference>
<dbReference type="NCBIfam" id="NF009544">
    <property type="entry name" value="PRK12928.1"/>
    <property type="match status" value="1"/>
</dbReference>
<dbReference type="PANTHER" id="PTHR10949">
    <property type="entry name" value="LIPOYL SYNTHASE"/>
    <property type="match status" value="1"/>
</dbReference>
<dbReference type="PANTHER" id="PTHR10949:SF0">
    <property type="entry name" value="LIPOYL SYNTHASE, MITOCHONDRIAL"/>
    <property type="match status" value="1"/>
</dbReference>
<dbReference type="Pfam" id="PF16881">
    <property type="entry name" value="LIAS_N"/>
    <property type="match status" value="1"/>
</dbReference>
<dbReference type="Pfam" id="PF04055">
    <property type="entry name" value="Radical_SAM"/>
    <property type="match status" value="1"/>
</dbReference>
<dbReference type="PIRSF" id="PIRSF005963">
    <property type="entry name" value="Lipoyl_synth"/>
    <property type="match status" value="1"/>
</dbReference>
<dbReference type="SFLD" id="SFLDF00271">
    <property type="entry name" value="lipoyl_synthase"/>
    <property type="match status" value="1"/>
</dbReference>
<dbReference type="SFLD" id="SFLDS00029">
    <property type="entry name" value="Radical_SAM"/>
    <property type="match status" value="1"/>
</dbReference>
<dbReference type="SMART" id="SM00729">
    <property type="entry name" value="Elp3"/>
    <property type="match status" value="1"/>
</dbReference>
<dbReference type="SUPFAM" id="SSF102114">
    <property type="entry name" value="Radical SAM enzymes"/>
    <property type="match status" value="1"/>
</dbReference>
<dbReference type="PROSITE" id="PS51918">
    <property type="entry name" value="RADICAL_SAM"/>
    <property type="match status" value="1"/>
</dbReference>
<feature type="chain" id="PRO_0000102378" description="Lipoyl synthase">
    <location>
        <begin position="1"/>
        <end position="321"/>
    </location>
</feature>
<feature type="domain" description="Radical SAM core" evidence="2">
    <location>
        <begin position="80"/>
        <end position="297"/>
    </location>
</feature>
<feature type="binding site" evidence="1">
    <location>
        <position position="68"/>
    </location>
    <ligand>
        <name>[4Fe-4S] cluster</name>
        <dbReference type="ChEBI" id="CHEBI:49883"/>
        <label>1</label>
    </ligand>
</feature>
<feature type="binding site" evidence="1">
    <location>
        <position position="73"/>
    </location>
    <ligand>
        <name>[4Fe-4S] cluster</name>
        <dbReference type="ChEBI" id="CHEBI:49883"/>
        <label>1</label>
    </ligand>
</feature>
<feature type="binding site" evidence="1">
    <location>
        <position position="79"/>
    </location>
    <ligand>
        <name>[4Fe-4S] cluster</name>
        <dbReference type="ChEBI" id="CHEBI:49883"/>
        <label>1</label>
    </ligand>
</feature>
<feature type="binding site" evidence="1">
    <location>
        <position position="94"/>
    </location>
    <ligand>
        <name>[4Fe-4S] cluster</name>
        <dbReference type="ChEBI" id="CHEBI:49883"/>
        <label>2</label>
        <note>4Fe-4S-S-AdoMet</note>
    </ligand>
</feature>
<feature type="binding site" evidence="1">
    <location>
        <position position="98"/>
    </location>
    <ligand>
        <name>[4Fe-4S] cluster</name>
        <dbReference type="ChEBI" id="CHEBI:49883"/>
        <label>2</label>
        <note>4Fe-4S-S-AdoMet</note>
    </ligand>
</feature>
<feature type="binding site" evidence="1">
    <location>
        <position position="101"/>
    </location>
    <ligand>
        <name>[4Fe-4S] cluster</name>
        <dbReference type="ChEBI" id="CHEBI:49883"/>
        <label>2</label>
        <note>4Fe-4S-S-AdoMet</note>
    </ligand>
</feature>
<feature type="binding site" evidence="1">
    <location>
        <position position="308"/>
    </location>
    <ligand>
        <name>[4Fe-4S] cluster</name>
        <dbReference type="ChEBI" id="CHEBI:49883"/>
        <label>1</label>
    </ligand>
</feature>
<sequence length="321" mass="36451">MSKPIQMEKGVKYRDADKMALIPVKNMPTEQKEVLRKPDWMKIKLPADSQRIQDIKAAMRKNKLHSVCEEASCPNLAECFNHGTATFMILGAICTRRCPFCDVAHGRPLPPEAEEPQKLARTIADMKLKYVVITSVDRDDLRDGGAQHFADCNREIRELNPDIKIETLVPDFRGRMDVALDLMKDNPPDVFNHNLETAPRLYRKARPGANYKWSLELLKKFKEQHPDVPTKSGLMMGLGETKEEIIEVLKDLRAHGVTMLTLGQYLAPSRHHLPVERYVPPSEFDELKEVALELGFTHAACGPFVRSSYHADMQAQGLEIK</sequence>
<reference key="1">
    <citation type="journal article" date="2003" name="Lancet">
        <title>Genome sequence of Vibrio parahaemolyticus: a pathogenic mechanism distinct from that of V. cholerae.</title>
        <authorList>
            <person name="Makino K."/>
            <person name="Oshima K."/>
            <person name="Kurokawa K."/>
            <person name="Yokoyama K."/>
            <person name="Uda T."/>
            <person name="Tagomori K."/>
            <person name="Iijima Y."/>
            <person name="Najima M."/>
            <person name="Nakano M."/>
            <person name="Yamashita A."/>
            <person name="Kubota Y."/>
            <person name="Kimura S."/>
            <person name="Yasunaga T."/>
            <person name="Honda T."/>
            <person name="Shinagawa H."/>
            <person name="Hattori M."/>
            <person name="Iida T."/>
        </authorList>
    </citation>
    <scope>NUCLEOTIDE SEQUENCE [LARGE SCALE GENOMIC DNA]</scope>
    <source>
        <strain>RIMD 2210633</strain>
    </source>
</reference>